<accession>Q822M2</accession>
<keyword id="KW-0963">Cytoplasm</keyword>
<keyword id="KW-0488">Methylation</keyword>
<keyword id="KW-0648">Protein biosynthesis</keyword>
<gene>
    <name evidence="1" type="primary">prfA</name>
    <name type="ordered locus">CCA_00660</name>
</gene>
<comment type="function">
    <text evidence="1">Peptide chain release factor 1 directs the termination of translation in response to the peptide chain termination codons UAG and UAA.</text>
</comment>
<comment type="subcellular location">
    <subcellularLocation>
        <location evidence="1">Cytoplasm</location>
    </subcellularLocation>
</comment>
<comment type="PTM">
    <text evidence="1">Methylated by PrmC. Methylation increases the termination efficiency of RF1.</text>
</comment>
<comment type="similarity">
    <text evidence="1">Belongs to the prokaryotic/mitochondrial release factor family.</text>
</comment>
<protein>
    <recommendedName>
        <fullName evidence="1">Peptide chain release factor 1</fullName>
        <shortName evidence="1">RF-1</shortName>
    </recommendedName>
</protein>
<proteinExistence type="inferred from homology"/>
<sequence>MEKKILEYLKRLEEVEVKISNPEIFENPKEYSSLSKEHARLSELKNVYDKVLGQEKILNDDKEALAQEKDPEMIAMLEEGIQLGKAEVDKLYKVLENLLVPPDPDDDLNVIMELRAGTGGDEAALFVGDCVRMYHLYASTKGWKYEVLSASESDIGGYKEYVMGISGAAVKRLLQYEAGTHRVQRVPETETQGRVHTSAITVAVLPEPAEDDEEVFIDEKDLKIDTFRASGAGGQHVNVTDSAVRITHLPTGVVVTCQDERSQHKNKAKAMRILKARIRDAEMQRRQKEASAMRSAQVGSGDRSERIRTYNFSQNRVTDHRIGLTLYNLDKVMEGDLDAITSALVSHAYHQLLQHGNEENS</sequence>
<name>RF1_CHLCV</name>
<reference key="1">
    <citation type="journal article" date="2003" name="Nucleic Acids Res.">
        <title>Genome sequence of Chlamydophila caviae (Chlamydia psittaci GPIC): examining the role of niche-specific genes in the evolution of the Chlamydiaceae.</title>
        <authorList>
            <person name="Read T.D."/>
            <person name="Myers G.S.A."/>
            <person name="Brunham R.C."/>
            <person name="Nelson W.C."/>
            <person name="Paulsen I.T."/>
            <person name="Heidelberg J.F."/>
            <person name="Holtzapple E.K."/>
            <person name="Khouri H.M."/>
            <person name="Federova N.B."/>
            <person name="Carty H.A."/>
            <person name="Umayam L.A."/>
            <person name="Haft D.H."/>
            <person name="Peterson J.D."/>
            <person name="Beanan M.J."/>
            <person name="White O."/>
            <person name="Salzberg S.L."/>
            <person name="Hsia R.-C."/>
            <person name="McClarty G."/>
            <person name="Rank R.G."/>
            <person name="Bavoil P.M."/>
            <person name="Fraser C.M."/>
        </authorList>
    </citation>
    <scope>NUCLEOTIDE SEQUENCE [LARGE SCALE GENOMIC DNA]</scope>
    <source>
        <strain>ATCC VR-813 / DSM 19441 / 03DC25 / GPIC</strain>
    </source>
</reference>
<feature type="chain" id="PRO_0000177654" description="Peptide chain release factor 1">
    <location>
        <begin position="1"/>
        <end position="361"/>
    </location>
</feature>
<feature type="region of interest" description="Disordered" evidence="2">
    <location>
        <begin position="287"/>
        <end position="309"/>
    </location>
</feature>
<feature type="modified residue" description="N5-methylglutamine" evidence="1">
    <location>
        <position position="235"/>
    </location>
</feature>
<organism>
    <name type="scientific">Chlamydia caviae (strain ATCC VR-813 / DSM 19441 / 03DC25 / GPIC)</name>
    <name type="common">Chlamydophila caviae</name>
    <dbReference type="NCBI Taxonomy" id="227941"/>
    <lineage>
        <taxon>Bacteria</taxon>
        <taxon>Pseudomonadati</taxon>
        <taxon>Chlamydiota</taxon>
        <taxon>Chlamydiia</taxon>
        <taxon>Chlamydiales</taxon>
        <taxon>Chlamydiaceae</taxon>
        <taxon>Chlamydia/Chlamydophila group</taxon>
        <taxon>Chlamydia</taxon>
    </lineage>
</organism>
<evidence type="ECO:0000255" key="1">
    <source>
        <dbReference type="HAMAP-Rule" id="MF_00093"/>
    </source>
</evidence>
<evidence type="ECO:0000256" key="2">
    <source>
        <dbReference type="SAM" id="MobiDB-lite"/>
    </source>
</evidence>
<dbReference type="EMBL" id="AE015925">
    <property type="protein sequence ID" value="AAP05402.1"/>
    <property type="molecule type" value="Genomic_DNA"/>
</dbReference>
<dbReference type="RefSeq" id="WP_011006617.1">
    <property type="nucleotide sequence ID" value="NC_003361.3"/>
</dbReference>
<dbReference type="SMR" id="Q822M2"/>
<dbReference type="STRING" id="227941.CCA_00660"/>
<dbReference type="KEGG" id="cca:CCA_00660"/>
<dbReference type="eggNOG" id="COG0216">
    <property type="taxonomic scope" value="Bacteria"/>
</dbReference>
<dbReference type="HOGENOM" id="CLU_036856_0_1_0"/>
<dbReference type="OrthoDB" id="9806673at2"/>
<dbReference type="Proteomes" id="UP000002193">
    <property type="component" value="Chromosome"/>
</dbReference>
<dbReference type="GO" id="GO:0005737">
    <property type="term" value="C:cytoplasm"/>
    <property type="evidence" value="ECO:0007669"/>
    <property type="project" value="UniProtKB-SubCell"/>
</dbReference>
<dbReference type="GO" id="GO:0016149">
    <property type="term" value="F:translation release factor activity, codon specific"/>
    <property type="evidence" value="ECO:0007669"/>
    <property type="project" value="UniProtKB-UniRule"/>
</dbReference>
<dbReference type="FunFam" id="3.30.160.20:FF:000004">
    <property type="entry name" value="Peptide chain release factor 1"/>
    <property type="match status" value="1"/>
</dbReference>
<dbReference type="FunFam" id="3.30.70.1660:FF:000002">
    <property type="entry name" value="Peptide chain release factor 1"/>
    <property type="match status" value="1"/>
</dbReference>
<dbReference type="FunFam" id="3.30.70.1660:FF:000004">
    <property type="entry name" value="Peptide chain release factor 1"/>
    <property type="match status" value="1"/>
</dbReference>
<dbReference type="Gene3D" id="3.30.160.20">
    <property type="match status" value="1"/>
</dbReference>
<dbReference type="Gene3D" id="3.30.70.1660">
    <property type="match status" value="1"/>
</dbReference>
<dbReference type="Gene3D" id="6.10.140.1950">
    <property type="match status" value="1"/>
</dbReference>
<dbReference type="HAMAP" id="MF_00093">
    <property type="entry name" value="Rel_fac_1"/>
    <property type="match status" value="1"/>
</dbReference>
<dbReference type="InterPro" id="IPR005139">
    <property type="entry name" value="PCRF"/>
</dbReference>
<dbReference type="InterPro" id="IPR000352">
    <property type="entry name" value="Pep_chain_release_fac_I"/>
</dbReference>
<dbReference type="InterPro" id="IPR045853">
    <property type="entry name" value="Pep_chain_release_fac_I_sf"/>
</dbReference>
<dbReference type="InterPro" id="IPR050057">
    <property type="entry name" value="Prokaryotic/Mito_RF"/>
</dbReference>
<dbReference type="InterPro" id="IPR004373">
    <property type="entry name" value="RF-1"/>
</dbReference>
<dbReference type="NCBIfam" id="TIGR00019">
    <property type="entry name" value="prfA"/>
    <property type="match status" value="1"/>
</dbReference>
<dbReference type="NCBIfam" id="NF001859">
    <property type="entry name" value="PRK00591.1"/>
    <property type="match status" value="1"/>
</dbReference>
<dbReference type="PANTHER" id="PTHR43804">
    <property type="entry name" value="LD18447P"/>
    <property type="match status" value="1"/>
</dbReference>
<dbReference type="PANTHER" id="PTHR43804:SF7">
    <property type="entry name" value="LD18447P"/>
    <property type="match status" value="1"/>
</dbReference>
<dbReference type="Pfam" id="PF03462">
    <property type="entry name" value="PCRF"/>
    <property type="match status" value="1"/>
</dbReference>
<dbReference type="Pfam" id="PF00472">
    <property type="entry name" value="RF-1"/>
    <property type="match status" value="1"/>
</dbReference>
<dbReference type="SMART" id="SM00937">
    <property type="entry name" value="PCRF"/>
    <property type="match status" value="1"/>
</dbReference>
<dbReference type="SUPFAM" id="SSF75620">
    <property type="entry name" value="Release factor"/>
    <property type="match status" value="1"/>
</dbReference>
<dbReference type="PROSITE" id="PS00745">
    <property type="entry name" value="RF_PROK_I"/>
    <property type="match status" value="1"/>
</dbReference>